<accession>Q54EP1</accession>
<sequence>MEWDEFKGIFYTNPIFALLAPGISLNNIKELCRERDEILHEDRKEEIIKIIHKIKKTYEALPDPDKDFAYC</sequence>
<gene>
    <name type="ORF">DDB_G0291420</name>
</gene>
<keyword id="KW-1185">Reference proteome</keyword>
<dbReference type="EMBL" id="AAFI02000177">
    <property type="protein sequence ID" value="EAL61694.1"/>
    <property type="molecule type" value="Genomic_DNA"/>
</dbReference>
<dbReference type="RefSeq" id="XP_635199.1">
    <property type="nucleotide sequence ID" value="XM_630107.1"/>
</dbReference>
<dbReference type="SMR" id="Q54EP1"/>
<dbReference type="FunCoup" id="Q54EP1">
    <property type="interactions" value="877"/>
</dbReference>
<dbReference type="PaxDb" id="44689-DDB0183882"/>
<dbReference type="EnsemblProtists" id="EAL61694">
    <property type="protein sequence ID" value="EAL61694"/>
    <property type="gene ID" value="DDB_G0291420"/>
</dbReference>
<dbReference type="GeneID" id="8628144"/>
<dbReference type="KEGG" id="ddi:DDB_G0291420"/>
<dbReference type="dictyBase" id="DDB_G0291420"/>
<dbReference type="VEuPathDB" id="AmoebaDB:DDB_G0291420"/>
<dbReference type="eggNOG" id="ENOG502RIMT">
    <property type="taxonomic scope" value="Eukaryota"/>
</dbReference>
<dbReference type="HOGENOM" id="CLU_2745370_0_0_1"/>
<dbReference type="InParanoid" id="Q54EP1"/>
<dbReference type="OMA" id="MEWDEFK"/>
<dbReference type="PRO" id="PR:Q54EP1"/>
<dbReference type="Proteomes" id="UP000002195">
    <property type="component" value="Chromosome 6"/>
</dbReference>
<proteinExistence type="predicted"/>
<name>Y3882_DICDI</name>
<feature type="chain" id="PRO_0000346887" description="Putative uncharacterized protein DDB_G0291420">
    <location>
        <begin position="1"/>
        <end position="71"/>
    </location>
</feature>
<protein>
    <recommendedName>
        <fullName>Putative uncharacterized protein DDB_G0291420</fullName>
    </recommendedName>
</protein>
<reference key="1">
    <citation type="journal article" date="2005" name="Nature">
        <title>The genome of the social amoeba Dictyostelium discoideum.</title>
        <authorList>
            <person name="Eichinger L."/>
            <person name="Pachebat J.A."/>
            <person name="Gloeckner G."/>
            <person name="Rajandream M.A."/>
            <person name="Sucgang R."/>
            <person name="Berriman M."/>
            <person name="Song J."/>
            <person name="Olsen R."/>
            <person name="Szafranski K."/>
            <person name="Xu Q."/>
            <person name="Tunggal B."/>
            <person name="Kummerfeld S."/>
            <person name="Madera M."/>
            <person name="Konfortov B.A."/>
            <person name="Rivero F."/>
            <person name="Bankier A.T."/>
            <person name="Lehmann R."/>
            <person name="Hamlin N."/>
            <person name="Davies R."/>
            <person name="Gaudet P."/>
            <person name="Fey P."/>
            <person name="Pilcher K."/>
            <person name="Chen G."/>
            <person name="Saunders D."/>
            <person name="Sodergren E.J."/>
            <person name="Davis P."/>
            <person name="Kerhornou A."/>
            <person name="Nie X."/>
            <person name="Hall N."/>
            <person name="Anjard C."/>
            <person name="Hemphill L."/>
            <person name="Bason N."/>
            <person name="Farbrother P."/>
            <person name="Desany B."/>
            <person name="Just E."/>
            <person name="Morio T."/>
            <person name="Rost R."/>
            <person name="Churcher C.M."/>
            <person name="Cooper J."/>
            <person name="Haydock S."/>
            <person name="van Driessche N."/>
            <person name="Cronin A."/>
            <person name="Goodhead I."/>
            <person name="Muzny D.M."/>
            <person name="Mourier T."/>
            <person name="Pain A."/>
            <person name="Lu M."/>
            <person name="Harper D."/>
            <person name="Lindsay R."/>
            <person name="Hauser H."/>
            <person name="James K.D."/>
            <person name="Quiles M."/>
            <person name="Madan Babu M."/>
            <person name="Saito T."/>
            <person name="Buchrieser C."/>
            <person name="Wardroper A."/>
            <person name="Felder M."/>
            <person name="Thangavelu M."/>
            <person name="Johnson D."/>
            <person name="Knights A."/>
            <person name="Loulseged H."/>
            <person name="Mungall K.L."/>
            <person name="Oliver K."/>
            <person name="Price C."/>
            <person name="Quail M.A."/>
            <person name="Urushihara H."/>
            <person name="Hernandez J."/>
            <person name="Rabbinowitsch E."/>
            <person name="Steffen D."/>
            <person name="Sanders M."/>
            <person name="Ma J."/>
            <person name="Kohara Y."/>
            <person name="Sharp S."/>
            <person name="Simmonds M.N."/>
            <person name="Spiegler S."/>
            <person name="Tivey A."/>
            <person name="Sugano S."/>
            <person name="White B."/>
            <person name="Walker D."/>
            <person name="Woodward J.R."/>
            <person name="Winckler T."/>
            <person name="Tanaka Y."/>
            <person name="Shaulsky G."/>
            <person name="Schleicher M."/>
            <person name="Weinstock G.M."/>
            <person name="Rosenthal A."/>
            <person name="Cox E.C."/>
            <person name="Chisholm R.L."/>
            <person name="Gibbs R.A."/>
            <person name="Loomis W.F."/>
            <person name="Platzer M."/>
            <person name="Kay R.R."/>
            <person name="Williams J.G."/>
            <person name="Dear P.H."/>
            <person name="Noegel A.A."/>
            <person name="Barrell B.G."/>
            <person name="Kuspa A."/>
        </authorList>
    </citation>
    <scope>NUCLEOTIDE SEQUENCE [LARGE SCALE GENOMIC DNA]</scope>
    <source>
        <strain>AX4</strain>
    </source>
</reference>
<organism>
    <name type="scientific">Dictyostelium discoideum</name>
    <name type="common">Social amoeba</name>
    <dbReference type="NCBI Taxonomy" id="44689"/>
    <lineage>
        <taxon>Eukaryota</taxon>
        <taxon>Amoebozoa</taxon>
        <taxon>Evosea</taxon>
        <taxon>Eumycetozoa</taxon>
        <taxon>Dictyostelia</taxon>
        <taxon>Dictyosteliales</taxon>
        <taxon>Dictyosteliaceae</taxon>
        <taxon>Dictyostelium</taxon>
    </lineage>
</organism>